<sequence>MRIEDFSLKNVSSSPGVYLMKDSQGVVLYVGKAKNLRNRLSSYLQKNGDSRERIPFLMKRTADIDTIVVSNETEALLLENNLIKKYQPRYNVLLKDDKTFFCLSISLQHPWPKIEAIRTRALSPSKKKQLLFGPYVSAEACYALLEVISHWFPLRTCSDREFSTRQRPCVLYEMKRCLAPCVGFCSQTEYQETLEKAILFLKGEVDTTIANLEEAIKKASQEHKFEHAAALYRTLTLIRQTMAKQHVEKFQAYDIDVLGLYRKGPLAIISVLSVYSGKLLGARHFTFPENAQEDSSLFSSFILQYYAENTRIPKQIFVPVSPDSPELPYLLNAAEPPKIRCPKTEYGKELLALAHKNAAEQAKPLNSITLPYEELQQLFKFSQYPNRIECYDNAHLQGEHNVGVYIVFEKGSFSPKQYRTFSITSHGDDLAAFEEVLTRRFRSLTTELPDLIVIDGGRNQFRRAQHILEKLNLTGIAVVSIAKESGNHSRGLQQEKLFCEAFPQGILLNPTSEILQFFQLLRDEAHRFAINRYRNKHSKAILTTKKIPGIGKTKTTHLLQKFKSWKRILSASEEELKTVQGLTKKDIQRIQEEGKRAE</sequence>
<evidence type="ECO:0000255" key="1">
    <source>
        <dbReference type="HAMAP-Rule" id="MF_00203"/>
    </source>
</evidence>
<evidence type="ECO:0000305" key="2"/>
<reference key="1">
    <citation type="journal article" date="2000" name="Nucleic Acids Res.">
        <title>Genome sequences of Chlamydia trachomatis MoPn and Chlamydia pneumoniae AR39.</title>
        <authorList>
            <person name="Read T.D."/>
            <person name="Brunham R.C."/>
            <person name="Shen C."/>
            <person name="Gill S.R."/>
            <person name="Heidelberg J.F."/>
            <person name="White O."/>
            <person name="Hickey E.K."/>
            <person name="Peterson J.D."/>
            <person name="Utterback T.R."/>
            <person name="Berry K.J."/>
            <person name="Bass S."/>
            <person name="Linher K.D."/>
            <person name="Weidman J.F."/>
            <person name="Khouri H.M."/>
            <person name="Craven B."/>
            <person name="Bowman C."/>
            <person name="Dodson R.J."/>
            <person name="Gwinn M.L."/>
            <person name="Nelson W.C."/>
            <person name="DeBoy R.T."/>
            <person name="Kolonay J.F."/>
            <person name="McClarty G."/>
            <person name="Salzberg S.L."/>
            <person name="Eisen J.A."/>
            <person name="Fraser C.M."/>
        </authorList>
    </citation>
    <scope>NUCLEOTIDE SEQUENCE [LARGE SCALE GENOMIC DNA]</scope>
    <source>
        <strain>MoPn / Nigg</strain>
    </source>
</reference>
<comment type="function">
    <text evidence="1">The UvrABC repair system catalyzes the recognition and processing of DNA lesions. UvrC both incises the 5' and 3' sides of the lesion. The N-terminal half is responsible for the 3' incision and the C-terminal half is responsible for the 5' incision.</text>
</comment>
<comment type="subunit">
    <text evidence="1">Interacts with UvrB in an incision complex.</text>
</comment>
<comment type="subcellular location">
    <subcellularLocation>
        <location evidence="1">Cytoplasm</location>
    </subcellularLocation>
</comment>
<comment type="similarity">
    <text evidence="1">Belongs to the UvrC family.</text>
</comment>
<comment type="sequence caution" evidence="2">
    <conflict type="erroneous initiation">
        <sequence resource="EMBL-CDS" id="AAF39047"/>
    </conflict>
</comment>
<name>UVRC_CHLMU</name>
<proteinExistence type="inferred from homology"/>
<protein>
    <recommendedName>
        <fullName evidence="1">UvrABC system protein C</fullName>
        <shortName evidence="1">Protein UvrC</shortName>
    </recommendedName>
    <alternativeName>
        <fullName evidence="1">Excinuclease ABC subunit C</fullName>
    </alternativeName>
</protein>
<organism>
    <name type="scientific">Chlamydia muridarum (strain MoPn / Nigg)</name>
    <dbReference type="NCBI Taxonomy" id="243161"/>
    <lineage>
        <taxon>Bacteria</taxon>
        <taxon>Pseudomonadati</taxon>
        <taxon>Chlamydiota</taxon>
        <taxon>Chlamydiia</taxon>
        <taxon>Chlamydiales</taxon>
        <taxon>Chlamydiaceae</taxon>
        <taxon>Chlamydia/Chlamydophila group</taxon>
        <taxon>Chlamydia</taxon>
    </lineage>
</organism>
<accession>Q9PLD1</accession>
<feature type="chain" id="PRO_0000138293" description="UvrABC system protein C">
    <location>
        <begin position="1"/>
        <end position="598"/>
    </location>
</feature>
<feature type="domain" description="GIY-YIG" evidence="1">
    <location>
        <begin position="13"/>
        <end position="92"/>
    </location>
</feature>
<feature type="domain" description="UVR" evidence="1">
    <location>
        <begin position="206"/>
        <end position="241"/>
    </location>
</feature>
<gene>
    <name evidence="1" type="primary">uvrC</name>
    <name type="ordered locus">TC_0173</name>
</gene>
<keyword id="KW-0963">Cytoplasm</keyword>
<keyword id="KW-0227">DNA damage</keyword>
<keyword id="KW-0228">DNA excision</keyword>
<keyword id="KW-0234">DNA repair</keyword>
<keyword id="KW-0267">Excision nuclease</keyword>
<keyword id="KW-0742">SOS response</keyword>
<dbReference type="EMBL" id="AE002160">
    <property type="protein sequence ID" value="AAF39047.1"/>
    <property type="status" value="ALT_INIT"/>
    <property type="molecule type" value="Genomic_DNA"/>
</dbReference>
<dbReference type="PIR" id="F81733">
    <property type="entry name" value="F81733"/>
</dbReference>
<dbReference type="RefSeq" id="WP_029589537.1">
    <property type="nucleotide sequence ID" value="NZ_CP063055.1"/>
</dbReference>
<dbReference type="SMR" id="Q9PLD1"/>
<dbReference type="GeneID" id="1246298"/>
<dbReference type="KEGG" id="cmu:TC_0173"/>
<dbReference type="eggNOG" id="COG0322">
    <property type="taxonomic scope" value="Bacteria"/>
</dbReference>
<dbReference type="HOGENOM" id="CLU_014841_3_2_0"/>
<dbReference type="OrthoDB" id="9804933at2"/>
<dbReference type="Proteomes" id="UP000000800">
    <property type="component" value="Chromosome"/>
</dbReference>
<dbReference type="GO" id="GO:0005737">
    <property type="term" value="C:cytoplasm"/>
    <property type="evidence" value="ECO:0007669"/>
    <property type="project" value="UniProtKB-SubCell"/>
</dbReference>
<dbReference type="GO" id="GO:0009380">
    <property type="term" value="C:excinuclease repair complex"/>
    <property type="evidence" value="ECO:0007669"/>
    <property type="project" value="InterPro"/>
</dbReference>
<dbReference type="GO" id="GO:0003677">
    <property type="term" value="F:DNA binding"/>
    <property type="evidence" value="ECO:0007669"/>
    <property type="project" value="UniProtKB-UniRule"/>
</dbReference>
<dbReference type="GO" id="GO:0009381">
    <property type="term" value="F:excinuclease ABC activity"/>
    <property type="evidence" value="ECO:0007669"/>
    <property type="project" value="UniProtKB-UniRule"/>
</dbReference>
<dbReference type="GO" id="GO:0006289">
    <property type="term" value="P:nucleotide-excision repair"/>
    <property type="evidence" value="ECO:0007669"/>
    <property type="project" value="UniProtKB-UniRule"/>
</dbReference>
<dbReference type="GO" id="GO:0009432">
    <property type="term" value="P:SOS response"/>
    <property type="evidence" value="ECO:0007669"/>
    <property type="project" value="UniProtKB-UniRule"/>
</dbReference>
<dbReference type="CDD" id="cd10434">
    <property type="entry name" value="GIY-YIG_UvrC_Cho"/>
    <property type="match status" value="1"/>
</dbReference>
<dbReference type="FunFam" id="3.40.1440.10:FF:000001">
    <property type="entry name" value="UvrABC system protein C"/>
    <property type="match status" value="1"/>
</dbReference>
<dbReference type="Gene3D" id="1.10.150.20">
    <property type="entry name" value="5' to 3' exonuclease, C-terminal subdomain"/>
    <property type="match status" value="1"/>
</dbReference>
<dbReference type="Gene3D" id="3.40.1440.10">
    <property type="entry name" value="GIY-YIG endonuclease"/>
    <property type="match status" value="1"/>
</dbReference>
<dbReference type="Gene3D" id="3.30.420.340">
    <property type="entry name" value="UvrC, RNAse H endonuclease domain"/>
    <property type="match status" value="1"/>
</dbReference>
<dbReference type="HAMAP" id="MF_00203">
    <property type="entry name" value="UvrC"/>
    <property type="match status" value="1"/>
</dbReference>
<dbReference type="InterPro" id="IPR000305">
    <property type="entry name" value="GIY-YIG_endonuc"/>
</dbReference>
<dbReference type="InterPro" id="IPR035901">
    <property type="entry name" value="GIY-YIG_endonuc_sf"/>
</dbReference>
<dbReference type="InterPro" id="IPR047296">
    <property type="entry name" value="GIY-YIG_UvrC_Cho"/>
</dbReference>
<dbReference type="InterPro" id="IPR010994">
    <property type="entry name" value="RuvA_2-like"/>
</dbReference>
<dbReference type="InterPro" id="IPR001943">
    <property type="entry name" value="UVR_dom"/>
</dbReference>
<dbReference type="InterPro" id="IPR036876">
    <property type="entry name" value="UVR_dom_sf"/>
</dbReference>
<dbReference type="InterPro" id="IPR050066">
    <property type="entry name" value="UvrABC_protein_C"/>
</dbReference>
<dbReference type="InterPro" id="IPR004791">
    <property type="entry name" value="UvrC"/>
</dbReference>
<dbReference type="InterPro" id="IPR001162">
    <property type="entry name" value="UvrC_RNase_H_dom"/>
</dbReference>
<dbReference type="InterPro" id="IPR038476">
    <property type="entry name" value="UvrC_RNase_H_dom_sf"/>
</dbReference>
<dbReference type="NCBIfam" id="TIGR00194">
    <property type="entry name" value="uvrC"/>
    <property type="match status" value="1"/>
</dbReference>
<dbReference type="PANTHER" id="PTHR30562:SF1">
    <property type="entry name" value="UVRABC SYSTEM PROTEIN C"/>
    <property type="match status" value="1"/>
</dbReference>
<dbReference type="PANTHER" id="PTHR30562">
    <property type="entry name" value="UVRC/OXIDOREDUCTASE"/>
    <property type="match status" value="1"/>
</dbReference>
<dbReference type="Pfam" id="PF01541">
    <property type="entry name" value="GIY-YIG"/>
    <property type="match status" value="1"/>
</dbReference>
<dbReference type="Pfam" id="PF14520">
    <property type="entry name" value="HHH_5"/>
    <property type="match status" value="1"/>
</dbReference>
<dbReference type="Pfam" id="PF22920">
    <property type="entry name" value="UvrC_RNaseH"/>
    <property type="match status" value="1"/>
</dbReference>
<dbReference type="Pfam" id="PF08459">
    <property type="entry name" value="UvrC_RNaseH_dom"/>
    <property type="match status" value="1"/>
</dbReference>
<dbReference type="SMART" id="SM00465">
    <property type="entry name" value="GIYc"/>
    <property type="match status" value="1"/>
</dbReference>
<dbReference type="SUPFAM" id="SSF46600">
    <property type="entry name" value="C-terminal UvrC-binding domain of UvrB"/>
    <property type="match status" value="1"/>
</dbReference>
<dbReference type="SUPFAM" id="SSF82771">
    <property type="entry name" value="GIY-YIG endonuclease"/>
    <property type="match status" value="1"/>
</dbReference>
<dbReference type="SUPFAM" id="SSF47781">
    <property type="entry name" value="RuvA domain 2-like"/>
    <property type="match status" value="1"/>
</dbReference>
<dbReference type="PROSITE" id="PS50164">
    <property type="entry name" value="GIY_YIG"/>
    <property type="match status" value="1"/>
</dbReference>
<dbReference type="PROSITE" id="PS50151">
    <property type="entry name" value="UVR"/>
    <property type="match status" value="1"/>
</dbReference>
<dbReference type="PROSITE" id="PS50165">
    <property type="entry name" value="UVRC"/>
    <property type="match status" value="1"/>
</dbReference>